<accession>Q3YX94</accession>
<keyword id="KW-0998">Cell outer membrane</keyword>
<keyword id="KW-0133">Cell shape</keyword>
<keyword id="KW-0449">Lipoprotein</keyword>
<keyword id="KW-0472">Membrane</keyword>
<keyword id="KW-0564">Palmitate</keyword>
<keyword id="KW-0573">Peptidoglycan synthesis</keyword>
<keyword id="KW-1185">Reference proteome</keyword>
<keyword id="KW-0732">Signal</keyword>
<feature type="signal peptide" evidence="1">
    <location>
        <begin position="1"/>
        <end position="26"/>
    </location>
</feature>
<feature type="chain" id="PRO_0000405944" description="Penicillin-binding protein activator LpoA">
    <location>
        <begin position="27"/>
        <end position="678"/>
    </location>
</feature>
<feature type="region of interest" description="Disordered" evidence="2">
    <location>
        <begin position="302"/>
        <end position="340"/>
    </location>
</feature>
<feature type="region of interest" description="Disordered" evidence="2">
    <location>
        <begin position="496"/>
        <end position="528"/>
    </location>
</feature>
<feature type="compositionally biased region" description="Low complexity" evidence="2">
    <location>
        <begin position="330"/>
        <end position="340"/>
    </location>
</feature>
<feature type="compositionally biased region" description="Low complexity" evidence="2">
    <location>
        <begin position="513"/>
        <end position="528"/>
    </location>
</feature>
<feature type="lipid moiety-binding region" description="N-palmitoyl cysteine" evidence="1">
    <location>
        <position position="27"/>
    </location>
</feature>
<feature type="lipid moiety-binding region" description="S-diacylglycerol cysteine" evidence="1">
    <location>
        <position position="27"/>
    </location>
</feature>
<protein>
    <recommendedName>
        <fullName evidence="1">Penicillin-binding protein activator LpoA</fullName>
        <shortName evidence="1">PBP activator LpoA</shortName>
    </recommendedName>
</protein>
<proteinExistence type="inferred from homology"/>
<gene>
    <name evidence="1" type="primary">lpoA</name>
    <name type="ordered locus">SSON_3293</name>
</gene>
<dbReference type="EMBL" id="CP000038">
    <property type="protein sequence ID" value="AAZ89868.1"/>
    <property type="molecule type" value="Genomic_DNA"/>
</dbReference>
<dbReference type="RefSeq" id="WP_000249140.1">
    <property type="nucleotide sequence ID" value="NC_007384.1"/>
</dbReference>
<dbReference type="BMRB" id="Q3YX94"/>
<dbReference type="SMR" id="Q3YX94"/>
<dbReference type="GeneID" id="93778837"/>
<dbReference type="KEGG" id="ssn:SSON_3293"/>
<dbReference type="HOGENOM" id="CLU_026091_1_1_6"/>
<dbReference type="Proteomes" id="UP000002529">
    <property type="component" value="Chromosome"/>
</dbReference>
<dbReference type="GO" id="GO:0031241">
    <property type="term" value="C:periplasmic side of cell outer membrane"/>
    <property type="evidence" value="ECO:0007669"/>
    <property type="project" value="UniProtKB-UniRule"/>
</dbReference>
<dbReference type="GO" id="GO:0042597">
    <property type="term" value="C:periplasmic space"/>
    <property type="evidence" value="ECO:0007669"/>
    <property type="project" value="InterPro"/>
</dbReference>
<dbReference type="GO" id="GO:0030234">
    <property type="term" value="F:enzyme regulator activity"/>
    <property type="evidence" value="ECO:0007669"/>
    <property type="project" value="UniProtKB-UniRule"/>
</dbReference>
<dbReference type="GO" id="GO:0004553">
    <property type="term" value="F:hydrolase activity, hydrolyzing O-glycosyl compounds"/>
    <property type="evidence" value="ECO:0007669"/>
    <property type="project" value="InterPro"/>
</dbReference>
<dbReference type="GO" id="GO:0009252">
    <property type="term" value="P:peptidoglycan biosynthetic process"/>
    <property type="evidence" value="ECO:0007669"/>
    <property type="project" value="UniProtKB-UniRule"/>
</dbReference>
<dbReference type="GO" id="GO:0008360">
    <property type="term" value="P:regulation of cell shape"/>
    <property type="evidence" value="ECO:0007669"/>
    <property type="project" value="UniProtKB-KW"/>
</dbReference>
<dbReference type="CDD" id="cd06339">
    <property type="entry name" value="PBP1_YraM_LppC_lipoprotein-like"/>
    <property type="match status" value="1"/>
</dbReference>
<dbReference type="FunFam" id="1.25.40.10:FF:000199">
    <property type="entry name" value="Penicillin-binding protein activator LpoA"/>
    <property type="match status" value="1"/>
</dbReference>
<dbReference type="FunFam" id="1.25.40.650:FF:000001">
    <property type="entry name" value="Penicillin-binding protein activator LpoA"/>
    <property type="match status" value="1"/>
</dbReference>
<dbReference type="Gene3D" id="1.25.40.650">
    <property type="match status" value="1"/>
</dbReference>
<dbReference type="Gene3D" id="3.40.50.2300">
    <property type="match status" value="2"/>
</dbReference>
<dbReference type="Gene3D" id="1.25.40.10">
    <property type="entry name" value="Tetratricopeptide repeat domain"/>
    <property type="match status" value="1"/>
</dbReference>
<dbReference type="HAMAP" id="MF_01890">
    <property type="entry name" value="LpoA"/>
    <property type="match status" value="1"/>
</dbReference>
<dbReference type="InterPro" id="IPR007443">
    <property type="entry name" value="LpoA"/>
</dbReference>
<dbReference type="InterPro" id="IPR008939">
    <property type="entry name" value="Lytic_TGlycosylase_superhlx_U"/>
</dbReference>
<dbReference type="InterPro" id="IPR028082">
    <property type="entry name" value="Peripla_BP_I"/>
</dbReference>
<dbReference type="InterPro" id="IPR011990">
    <property type="entry name" value="TPR-like_helical_dom_sf"/>
</dbReference>
<dbReference type="PANTHER" id="PTHR38038">
    <property type="entry name" value="PENICILLIN-BINDING PROTEIN ACTIVATOR LPOA"/>
    <property type="match status" value="1"/>
</dbReference>
<dbReference type="PANTHER" id="PTHR38038:SF1">
    <property type="entry name" value="PENICILLIN-BINDING PROTEIN ACTIVATOR LPOA"/>
    <property type="match status" value="1"/>
</dbReference>
<dbReference type="Pfam" id="PF04348">
    <property type="entry name" value="LppC"/>
    <property type="match status" value="2"/>
</dbReference>
<dbReference type="SUPFAM" id="SSF48435">
    <property type="entry name" value="Bacterial muramidases"/>
    <property type="match status" value="1"/>
</dbReference>
<dbReference type="SUPFAM" id="SSF53822">
    <property type="entry name" value="Periplasmic binding protein-like I"/>
    <property type="match status" value="1"/>
</dbReference>
<reference key="1">
    <citation type="journal article" date="2005" name="Nucleic Acids Res.">
        <title>Genome dynamics and diversity of Shigella species, the etiologic agents of bacillary dysentery.</title>
        <authorList>
            <person name="Yang F."/>
            <person name="Yang J."/>
            <person name="Zhang X."/>
            <person name="Chen L."/>
            <person name="Jiang Y."/>
            <person name="Yan Y."/>
            <person name="Tang X."/>
            <person name="Wang J."/>
            <person name="Xiong Z."/>
            <person name="Dong J."/>
            <person name="Xue Y."/>
            <person name="Zhu Y."/>
            <person name="Xu X."/>
            <person name="Sun L."/>
            <person name="Chen S."/>
            <person name="Nie H."/>
            <person name="Peng J."/>
            <person name="Xu J."/>
            <person name="Wang Y."/>
            <person name="Yuan Z."/>
            <person name="Wen Y."/>
            <person name="Yao Z."/>
            <person name="Shen Y."/>
            <person name="Qiang B."/>
            <person name="Hou Y."/>
            <person name="Yu J."/>
            <person name="Jin Q."/>
        </authorList>
    </citation>
    <scope>NUCLEOTIDE SEQUENCE [LARGE SCALE GENOMIC DNA]</scope>
    <source>
        <strain>Ss046</strain>
    </source>
</reference>
<name>LPOA_SHISS</name>
<sequence>MVPSTFSRLKAARCLPVVLAALIFAGCGTHTPDQSTAYMQGTAQADSAFYLQQMQQSSDDTRINWQLLAIRALVKEGKTGQAVELFNQLPQELNDSQRREKTLLAVEIKLAQKDFAGAQNLLAKITPADLEQNQQARYWQAKIDASQGRPSIDLLRALIAQEPLLGAKEKKQNIDATWQALSSMTQEQANTLVINADENILQGWLDLQRVWFDNRNDPDMMKAGIADWQKRYPNNPGAKMLPTQLVNVKAFKPASTNKIALLLPLNGQAAVFGRTIQQGFEAAKNIGTQPVAAQVAAAPAADVAEQPQPQTVDGVASPAQASVSDLTGDQPAAQPVPVSAPATSTAAVSAPANPSAELKIYDTSSQPLSQILSQVQQDGASIVVGPLLKNNVEELLKSNTPLNVLALNQPENIENRVNICYFALSPEDEARDAARHIRDQGKQAPLVLIPRSSLGDRVANAFAQEWQKLGGGTVLQQKFGSTSELRAGVNGGSGIALTGTPITPRATTDSGMTTNNPTLQTTPTDDQFTNNGGRVDAVYIVATPGEIAFIKPMIAMRNGSQSGAMLYASSRSAQGTAGPDFRLEMEGLQYSEIPMLAGGNLPLMQQALSAVNNDYSLARMYAMGVDAWSLANHFSQMRQVQGFEINGNTGSLTANPDCVINRKLSWLQYQQGQVVPVS</sequence>
<evidence type="ECO:0000255" key="1">
    <source>
        <dbReference type="HAMAP-Rule" id="MF_01890"/>
    </source>
</evidence>
<evidence type="ECO:0000256" key="2">
    <source>
        <dbReference type="SAM" id="MobiDB-lite"/>
    </source>
</evidence>
<comment type="function">
    <text evidence="1">Regulator of peptidoglycan synthesis that is essential for the function of penicillin-binding protein 1A (PBP1a).</text>
</comment>
<comment type="subunit">
    <text evidence="1">Interacts with PBP1a.</text>
</comment>
<comment type="subcellular location">
    <subcellularLocation>
        <location evidence="1">Cell outer membrane</location>
        <topology evidence="1">Lipid-anchor</topology>
        <orientation evidence="1">Periplasmic side</orientation>
    </subcellularLocation>
</comment>
<comment type="similarity">
    <text evidence="1">Belongs to the LpoA family.</text>
</comment>
<organism>
    <name type="scientific">Shigella sonnei (strain Ss046)</name>
    <dbReference type="NCBI Taxonomy" id="300269"/>
    <lineage>
        <taxon>Bacteria</taxon>
        <taxon>Pseudomonadati</taxon>
        <taxon>Pseudomonadota</taxon>
        <taxon>Gammaproteobacteria</taxon>
        <taxon>Enterobacterales</taxon>
        <taxon>Enterobacteriaceae</taxon>
        <taxon>Shigella</taxon>
    </lineage>
</organism>